<sequence>MWGLKVLLLPVVSFALYPEEILDTHWELWKKTHRKQYNNKVDEISRRLIWEKNLKYISIHNLEASLGVHTYELAMNHLGDMTSEEVVQKMTGLKVPLSHSRSNDTLYIPEWEGRAPDSVDYRKKGYVTPVKNQGQCGSCWAFSSVGALEGQLKKKTGKLLNLSPQNLVDCVSENDGCGGGYMTNAFQYVQKNRGIDSEDAYPYVGQEESCMYNPTGKAAKCRGYREIPEGNEKALKRAVARVGPVSVAIDASLTSFQFYSKGVYYDESCNSDNLNHAVLAVGYGIQKGNKHWIIKNSWGENWGNKGYILMARNKNNACGIANLASFPKM</sequence>
<keyword id="KW-0002">3D-structure</keyword>
<keyword id="KW-1003">Cell membrane</keyword>
<keyword id="KW-0225">Disease variant</keyword>
<keyword id="KW-1015">Disulfide bond</keyword>
<keyword id="KW-0325">Glycoprotein</keyword>
<keyword id="KW-0378">Hydrolase</keyword>
<keyword id="KW-0458">Lysosome</keyword>
<keyword id="KW-0472">Membrane</keyword>
<keyword id="KW-0645">Protease</keyword>
<keyword id="KW-1267">Proteomics identification</keyword>
<keyword id="KW-1185">Reference proteome</keyword>
<keyword id="KW-0964">Secreted</keyword>
<keyword id="KW-0732">Signal</keyword>
<keyword id="KW-0788">Thiol protease</keyword>
<keyword id="KW-0865">Zymogen</keyword>
<proteinExistence type="evidence at protein level"/>
<feature type="signal peptide" evidence="2">
    <location>
        <begin position="1"/>
        <end position="15"/>
    </location>
</feature>
<feature type="propeptide" id="PRO_0000026295" description="Activation peptide">
    <location>
        <begin position="16"/>
        <end position="114"/>
    </location>
</feature>
<feature type="chain" id="PRO_0000026296" description="Cathepsin K">
    <location>
        <begin position="115"/>
        <end position="329"/>
    </location>
</feature>
<feature type="active site" evidence="1">
    <location>
        <position position="139"/>
    </location>
</feature>
<feature type="active site" evidence="1">
    <location>
        <position position="276"/>
    </location>
</feature>
<feature type="active site" evidence="1">
    <location>
        <position position="296"/>
    </location>
</feature>
<feature type="glycosylation site" description="N-linked (GlcNAc...) asparagine" evidence="2">
    <location>
        <position position="103"/>
    </location>
</feature>
<feature type="disulfide bond">
    <location>
        <begin position="136"/>
        <end position="177"/>
    </location>
</feature>
<feature type="disulfide bond">
    <location>
        <begin position="170"/>
        <end position="210"/>
    </location>
</feature>
<feature type="disulfide bond">
    <location>
        <begin position="269"/>
        <end position="318"/>
    </location>
</feature>
<feature type="sequence variant" id="VAR_015738" description="In PKND; dbSNP:rs74315305." evidence="6 7">
    <original>G</original>
    <variation>E</variation>
    <location>
        <position position="79"/>
    </location>
</feature>
<feature type="sequence variant" id="VAR_074023" description="In PKND." evidence="9">
    <original>R</original>
    <variation>P</variation>
    <location>
        <position position="122"/>
    </location>
</feature>
<feature type="sequence variant" id="VAR_006725" description="In PKND; dbSNP:rs74315302." evidence="12">
    <original>G</original>
    <variation>R</variation>
    <location>
        <position position="146"/>
    </location>
</feature>
<feature type="sequence variant" id="VAR_015739" description="In PKND; dbSNP:rs74315304." evidence="9 13">
    <original>A</original>
    <variation>V</variation>
    <location>
        <position position="277"/>
    </location>
</feature>
<feature type="sequence variant" id="VAR_074024" description="In PKND; does not affect protein level; does not detect cysteine-type endopeptidase activity." evidence="10">
    <original>Y</original>
    <variation>C</variation>
    <location>
        <position position="283"/>
    </location>
</feature>
<feature type="sequence variant" id="VAR_006726" description="In PKND; dbSNP:rs29001685." evidence="7">
    <original>L</original>
    <variation>P</variation>
    <location>
        <position position="309"/>
    </location>
</feature>
<feature type="sequence conflict" description="In Ref. 3; AAA95998." evidence="14" ref="3">
    <original>R</original>
    <variation>P</variation>
    <location>
        <position position="46"/>
    </location>
</feature>
<feature type="helix" evidence="19">
    <location>
        <begin position="20"/>
        <end position="22"/>
    </location>
</feature>
<feature type="helix" evidence="21">
    <location>
        <begin position="24"/>
        <end position="33"/>
    </location>
</feature>
<feature type="helix" evidence="21">
    <location>
        <begin position="40"/>
        <end position="65"/>
    </location>
</feature>
<feature type="strand" evidence="21">
    <location>
        <begin position="70"/>
        <end position="73"/>
    </location>
</feature>
<feature type="turn" evidence="21">
    <location>
        <begin position="77"/>
        <end position="80"/>
    </location>
</feature>
<feature type="helix" evidence="21">
    <location>
        <begin position="83"/>
        <end position="86"/>
    </location>
</feature>
<feature type="helix" evidence="19">
    <location>
        <begin position="103"/>
        <end position="105"/>
    </location>
</feature>
<feature type="helix" evidence="18">
    <location>
        <begin position="121"/>
        <end position="124"/>
    </location>
</feature>
<feature type="strand" evidence="17">
    <location>
        <begin position="135"/>
        <end position="137"/>
    </location>
</feature>
<feature type="helix" evidence="18">
    <location>
        <begin position="139"/>
        <end position="156"/>
    </location>
</feature>
<feature type="helix" evidence="18">
    <location>
        <begin position="164"/>
        <end position="170"/>
    </location>
</feature>
<feature type="strand" evidence="20">
    <location>
        <begin position="172"/>
        <end position="174"/>
    </location>
</feature>
<feature type="helix" evidence="18">
    <location>
        <begin position="176"/>
        <end position="178"/>
    </location>
</feature>
<feature type="helix" evidence="18">
    <location>
        <begin position="182"/>
        <end position="192"/>
    </location>
</feature>
<feature type="strand" evidence="18">
    <location>
        <begin position="195"/>
        <end position="197"/>
    </location>
</feature>
<feature type="turn" evidence="18">
    <location>
        <begin position="198"/>
        <end position="200"/>
    </location>
</feature>
<feature type="helix" evidence="18">
    <location>
        <begin position="214"/>
        <end position="216"/>
    </location>
</feature>
<feature type="strand" evidence="18">
    <location>
        <begin position="217"/>
        <end position="219"/>
    </location>
</feature>
<feature type="strand" evidence="18">
    <location>
        <begin position="223"/>
        <end position="226"/>
    </location>
</feature>
<feature type="helix" evidence="18">
    <location>
        <begin position="232"/>
        <end position="242"/>
    </location>
</feature>
<feature type="strand" evidence="18">
    <location>
        <begin position="245"/>
        <end position="249"/>
    </location>
</feature>
<feature type="helix" evidence="18">
    <location>
        <begin position="254"/>
        <end position="257"/>
    </location>
</feature>
<feature type="strand" evidence="18">
    <location>
        <begin position="261"/>
        <end position="264"/>
    </location>
</feature>
<feature type="strand" evidence="18">
    <location>
        <begin position="276"/>
        <end position="286"/>
    </location>
</feature>
<feature type="strand" evidence="18">
    <location>
        <begin position="289"/>
        <end position="295"/>
    </location>
</feature>
<feature type="strand" evidence="16">
    <location>
        <begin position="300"/>
        <end position="302"/>
    </location>
</feature>
<feature type="turn" evidence="15">
    <location>
        <begin position="303"/>
        <end position="305"/>
    </location>
</feature>
<feature type="strand" evidence="18">
    <location>
        <begin position="307"/>
        <end position="316"/>
    </location>
</feature>
<feature type="helix" evidence="18">
    <location>
        <begin position="317"/>
        <end position="319"/>
    </location>
</feature>
<feature type="turn" evidence="17">
    <location>
        <begin position="320"/>
        <end position="322"/>
    </location>
</feature>
<feature type="strand" evidence="18">
    <location>
        <begin position="325"/>
        <end position="328"/>
    </location>
</feature>
<protein>
    <recommendedName>
        <fullName>Cathepsin K</fullName>
        <ecNumber>3.4.22.38</ecNumber>
    </recommendedName>
    <alternativeName>
        <fullName>Cathepsin O</fullName>
    </alternativeName>
    <alternativeName>
        <fullName>Cathepsin O2</fullName>
    </alternativeName>
    <alternativeName>
        <fullName>Cathepsin X</fullName>
    </alternativeName>
</protein>
<evidence type="ECO:0000250" key="1"/>
<evidence type="ECO:0000255" key="2"/>
<evidence type="ECO:0000255" key="3">
    <source>
        <dbReference type="PROSITE-ProRule" id="PRU10088"/>
    </source>
</evidence>
<evidence type="ECO:0000255" key="4">
    <source>
        <dbReference type="PROSITE-ProRule" id="PRU10089"/>
    </source>
</evidence>
<evidence type="ECO:0000255" key="5">
    <source>
        <dbReference type="PROSITE-ProRule" id="PRU10090"/>
    </source>
</evidence>
<evidence type="ECO:0000269" key="6">
    <source>
    </source>
</evidence>
<evidence type="ECO:0000269" key="7">
    <source>
    </source>
</evidence>
<evidence type="ECO:0000269" key="8">
    <source>
    </source>
</evidence>
<evidence type="ECO:0000269" key="9">
    <source>
    </source>
</evidence>
<evidence type="ECO:0000269" key="10">
    <source>
    </source>
</evidence>
<evidence type="ECO:0000269" key="11">
    <source>
    </source>
</evidence>
<evidence type="ECO:0000269" key="12">
    <source>
    </source>
</evidence>
<evidence type="ECO:0000269" key="13">
    <source>
    </source>
</evidence>
<evidence type="ECO:0000305" key="14"/>
<evidence type="ECO:0007829" key="15">
    <source>
        <dbReference type="PDB" id="1AYV"/>
    </source>
</evidence>
<evidence type="ECO:0007829" key="16">
    <source>
        <dbReference type="PDB" id="3H7D"/>
    </source>
</evidence>
<evidence type="ECO:0007829" key="17">
    <source>
        <dbReference type="PDB" id="3KX1"/>
    </source>
</evidence>
<evidence type="ECO:0007829" key="18">
    <source>
        <dbReference type="PDB" id="4X6H"/>
    </source>
</evidence>
<evidence type="ECO:0007829" key="19">
    <source>
        <dbReference type="PDB" id="5Z5O"/>
    </source>
</evidence>
<evidence type="ECO:0007829" key="20">
    <source>
        <dbReference type="PDB" id="6QL8"/>
    </source>
</evidence>
<evidence type="ECO:0007829" key="21">
    <source>
        <dbReference type="PDB" id="7QBM"/>
    </source>
</evidence>
<name>CATK_HUMAN</name>
<accession>P43235</accession>
<accession>Q6FHS6</accession>
<gene>
    <name type="primary">CTSK</name>
    <name type="synonym">CTSO</name>
    <name type="synonym">CTSO2</name>
</gene>
<reference key="1">
    <citation type="journal article" date="1995" name="FEBS Lett.">
        <title>Molecular cloning of human cathepsin O, a novel endoproteinase and homologue of rabbit OC2.</title>
        <authorList>
            <person name="Shi G.-P."/>
            <person name="Chapman H.A."/>
            <person name="Bhairi S.M."/>
            <person name="Deleeuw C."/>
            <person name="Reddy V.Y."/>
            <person name="Weiss S.J."/>
        </authorList>
    </citation>
    <scope>NUCLEOTIDE SEQUENCE [MRNA]</scope>
    <source>
        <tissue>Blood</tissue>
    </source>
</reference>
<reference key="2">
    <citation type="journal article" date="1995" name="Biochem. Biophys. Res. Commun.">
        <title>Molecular cloning of human cDNA for cathepsin K: novel cysteine proteinase predominantly expressed in bone.</title>
        <authorList>
            <person name="Inaoka T."/>
            <person name="Bilbe G."/>
            <person name="Ishibashi O."/>
            <person name="Tezuka K."/>
            <person name="Kumegawa M."/>
            <person name="Kokubo T."/>
        </authorList>
    </citation>
    <scope>NUCLEOTIDE SEQUENCE [MRNA]</scope>
    <scope>TISSUE SPECIFICITY</scope>
    <source>
        <tissue>Bone</tissue>
    </source>
</reference>
<reference key="3">
    <citation type="journal article" date="1995" name="J. Bone Miner. Res.">
        <title>Cloning and complete coding sequence of a novel human cathepsin expressed in giant cells of osteoclastomas.</title>
        <authorList>
            <person name="Li Y."/>
            <person name="Alexander M."/>
            <person name="Wucherpfennig A.L."/>
            <person name="Yelick P."/>
            <person name="Chen W."/>
            <person name="Stashenko P."/>
        </authorList>
    </citation>
    <scope>NUCLEOTIDE SEQUENCE [MRNA]</scope>
    <source>
        <tissue>Osteoclastoma</tissue>
    </source>
</reference>
<reference key="4">
    <citation type="journal article" date="1995" name="Biol. Chem. Hoppe-Seyler">
        <title>Human cathepsin O2, a novel cysteine protease highly expressed in osteoclastomas and ovary molecular cloning, sequencing and tissue distribution.</title>
        <authorList>
            <person name="Broemme D."/>
            <person name="Okamoto K."/>
        </authorList>
    </citation>
    <scope>NUCLEOTIDE SEQUENCE [MRNA]</scope>
    <source>
        <tissue>Spleen</tissue>
    </source>
</reference>
<reference key="5">
    <citation type="submission" date="2004-06" db="EMBL/GenBank/DDBJ databases">
        <title>Cloning of human full open reading frames in Gateway(TM) system entry vector (pDONR201).</title>
        <authorList>
            <person name="Ebert L."/>
            <person name="Schick M."/>
            <person name="Neubert P."/>
            <person name="Schatten R."/>
            <person name="Henze S."/>
            <person name="Korn B."/>
        </authorList>
    </citation>
    <scope>NUCLEOTIDE SEQUENCE [LARGE SCALE MRNA]</scope>
</reference>
<reference key="6">
    <citation type="journal article" date="2006" name="Nature">
        <title>The DNA sequence and biological annotation of human chromosome 1.</title>
        <authorList>
            <person name="Gregory S.G."/>
            <person name="Barlow K.F."/>
            <person name="McLay K.E."/>
            <person name="Kaul R."/>
            <person name="Swarbreck D."/>
            <person name="Dunham A."/>
            <person name="Scott C.E."/>
            <person name="Howe K.L."/>
            <person name="Woodfine K."/>
            <person name="Spencer C.C.A."/>
            <person name="Jones M.C."/>
            <person name="Gillson C."/>
            <person name="Searle S."/>
            <person name="Zhou Y."/>
            <person name="Kokocinski F."/>
            <person name="McDonald L."/>
            <person name="Evans R."/>
            <person name="Phillips K."/>
            <person name="Atkinson A."/>
            <person name="Cooper R."/>
            <person name="Jones C."/>
            <person name="Hall R.E."/>
            <person name="Andrews T.D."/>
            <person name="Lloyd C."/>
            <person name="Ainscough R."/>
            <person name="Almeida J.P."/>
            <person name="Ambrose K.D."/>
            <person name="Anderson F."/>
            <person name="Andrew R.W."/>
            <person name="Ashwell R.I.S."/>
            <person name="Aubin K."/>
            <person name="Babbage A.K."/>
            <person name="Bagguley C.L."/>
            <person name="Bailey J."/>
            <person name="Beasley H."/>
            <person name="Bethel G."/>
            <person name="Bird C.P."/>
            <person name="Bray-Allen S."/>
            <person name="Brown J.Y."/>
            <person name="Brown A.J."/>
            <person name="Buckley D."/>
            <person name="Burton J."/>
            <person name="Bye J."/>
            <person name="Carder C."/>
            <person name="Chapman J.C."/>
            <person name="Clark S.Y."/>
            <person name="Clarke G."/>
            <person name="Clee C."/>
            <person name="Cobley V."/>
            <person name="Collier R.E."/>
            <person name="Corby N."/>
            <person name="Coville G.J."/>
            <person name="Davies J."/>
            <person name="Deadman R."/>
            <person name="Dunn M."/>
            <person name="Earthrowl M."/>
            <person name="Ellington A.G."/>
            <person name="Errington H."/>
            <person name="Frankish A."/>
            <person name="Frankland J."/>
            <person name="French L."/>
            <person name="Garner P."/>
            <person name="Garnett J."/>
            <person name="Gay L."/>
            <person name="Ghori M.R.J."/>
            <person name="Gibson R."/>
            <person name="Gilby L.M."/>
            <person name="Gillett W."/>
            <person name="Glithero R.J."/>
            <person name="Grafham D.V."/>
            <person name="Griffiths C."/>
            <person name="Griffiths-Jones S."/>
            <person name="Grocock R."/>
            <person name="Hammond S."/>
            <person name="Harrison E.S.I."/>
            <person name="Hart E."/>
            <person name="Haugen E."/>
            <person name="Heath P.D."/>
            <person name="Holmes S."/>
            <person name="Holt K."/>
            <person name="Howden P.J."/>
            <person name="Hunt A.R."/>
            <person name="Hunt S.E."/>
            <person name="Hunter G."/>
            <person name="Isherwood J."/>
            <person name="James R."/>
            <person name="Johnson C."/>
            <person name="Johnson D."/>
            <person name="Joy A."/>
            <person name="Kay M."/>
            <person name="Kershaw J.K."/>
            <person name="Kibukawa M."/>
            <person name="Kimberley A.M."/>
            <person name="King A."/>
            <person name="Knights A.J."/>
            <person name="Lad H."/>
            <person name="Laird G."/>
            <person name="Lawlor S."/>
            <person name="Leongamornlert D.A."/>
            <person name="Lloyd D.M."/>
            <person name="Loveland J."/>
            <person name="Lovell J."/>
            <person name="Lush M.J."/>
            <person name="Lyne R."/>
            <person name="Martin S."/>
            <person name="Mashreghi-Mohammadi M."/>
            <person name="Matthews L."/>
            <person name="Matthews N.S.W."/>
            <person name="McLaren S."/>
            <person name="Milne S."/>
            <person name="Mistry S."/>
            <person name="Moore M.J.F."/>
            <person name="Nickerson T."/>
            <person name="O'Dell C.N."/>
            <person name="Oliver K."/>
            <person name="Palmeiri A."/>
            <person name="Palmer S.A."/>
            <person name="Parker A."/>
            <person name="Patel D."/>
            <person name="Pearce A.V."/>
            <person name="Peck A.I."/>
            <person name="Pelan S."/>
            <person name="Phelps K."/>
            <person name="Phillimore B.J."/>
            <person name="Plumb R."/>
            <person name="Rajan J."/>
            <person name="Raymond C."/>
            <person name="Rouse G."/>
            <person name="Saenphimmachak C."/>
            <person name="Sehra H.K."/>
            <person name="Sheridan E."/>
            <person name="Shownkeen R."/>
            <person name="Sims S."/>
            <person name="Skuce C.D."/>
            <person name="Smith M."/>
            <person name="Steward C."/>
            <person name="Subramanian S."/>
            <person name="Sycamore N."/>
            <person name="Tracey A."/>
            <person name="Tromans A."/>
            <person name="Van Helmond Z."/>
            <person name="Wall M."/>
            <person name="Wallis J.M."/>
            <person name="White S."/>
            <person name="Whitehead S.L."/>
            <person name="Wilkinson J.E."/>
            <person name="Willey D.L."/>
            <person name="Williams H."/>
            <person name="Wilming L."/>
            <person name="Wray P.W."/>
            <person name="Wu Z."/>
            <person name="Coulson A."/>
            <person name="Vaudin M."/>
            <person name="Sulston J.E."/>
            <person name="Durbin R.M."/>
            <person name="Hubbard T."/>
            <person name="Wooster R."/>
            <person name="Dunham I."/>
            <person name="Carter N.P."/>
            <person name="McVean G."/>
            <person name="Ross M.T."/>
            <person name="Harrow J."/>
            <person name="Olson M.V."/>
            <person name="Beck S."/>
            <person name="Rogers J."/>
            <person name="Bentley D.R."/>
        </authorList>
    </citation>
    <scope>NUCLEOTIDE SEQUENCE [LARGE SCALE GENOMIC DNA]</scope>
</reference>
<reference key="7">
    <citation type="submission" date="2005-09" db="EMBL/GenBank/DDBJ databases">
        <authorList>
            <person name="Mural R.J."/>
            <person name="Istrail S."/>
            <person name="Sutton G."/>
            <person name="Florea L."/>
            <person name="Halpern A.L."/>
            <person name="Mobarry C.M."/>
            <person name="Lippert R."/>
            <person name="Walenz B."/>
            <person name="Shatkay H."/>
            <person name="Dew I."/>
            <person name="Miller J.R."/>
            <person name="Flanigan M.J."/>
            <person name="Edwards N.J."/>
            <person name="Bolanos R."/>
            <person name="Fasulo D."/>
            <person name="Halldorsson B.V."/>
            <person name="Hannenhalli S."/>
            <person name="Turner R."/>
            <person name="Yooseph S."/>
            <person name="Lu F."/>
            <person name="Nusskern D.R."/>
            <person name="Shue B.C."/>
            <person name="Zheng X.H."/>
            <person name="Zhong F."/>
            <person name="Delcher A.L."/>
            <person name="Huson D.H."/>
            <person name="Kravitz S.A."/>
            <person name="Mouchard L."/>
            <person name="Reinert K."/>
            <person name="Remington K.A."/>
            <person name="Clark A.G."/>
            <person name="Waterman M.S."/>
            <person name="Eichler E.E."/>
            <person name="Adams M.D."/>
            <person name="Hunkapiller M.W."/>
            <person name="Myers E.W."/>
            <person name="Venter J.C."/>
        </authorList>
    </citation>
    <scope>NUCLEOTIDE SEQUENCE [LARGE SCALE GENOMIC DNA]</scope>
</reference>
<reference key="8">
    <citation type="journal article" date="2004" name="Genome Res.">
        <title>The status, quality, and expansion of the NIH full-length cDNA project: the Mammalian Gene Collection (MGC).</title>
        <authorList>
            <consortium name="The MGC Project Team"/>
        </authorList>
    </citation>
    <scope>NUCLEOTIDE SEQUENCE [LARGE SCALE MRNA]</scope>
    <source>
        <tissue>Skin</tissue>
    </source>
</reference>
<reference key="9">
    <citation type="journal article" date="2000" name="J. Cell Sci.">
        <title>Cathepsin K in thyroid epithelial cells: sequence, localization and possible function in extracellular proteolysis of thyroglobulin.</title>
        <authorList>
            <person name="Tepel C."/>
            <person name="Broemme D."/>
            <person name="Herzog V."/>
            <person name="Brix K."/>
        </authorList>
    </citation>
    <scope>FUNCTION</scope>
    <scope>SUBCELLULAR LOCATION</scope>
    <scope>TISSUE SPECIFICITY</scope>
    <source>
        <tissue>Thyroid</tissue>
    </source>
</reference>
<reference key="10">
    <citation type="journal article" date="1997" name="Nat. Struct. Biol.">
        <title>Crystal structure of human cathepsin K complexed with a potent inhibitor.</title>
        <authorList>
            <person name="McGrath M.E."/>
            <person name="Klaus J.L."/>
            <person name="Barnes M.G."/>
            <person name="Bromme D."/>
        </authorList>
    </citation>
    <scope>X-RAY CRYSTALLOGRAPHY (1.8 ANGSTROMS)</scope>
</reference>
<reference key="11">
    <citation type="journal article" date="1997" name="Proc. Natl. Acad. Sci. U.S.A.">
        <title>Design of potent and selective human cathepsin K inhibitors that span the active site.</title>
        <authorList>
            <person name="Thompson S.K."/>
            <person name="Halbert S.M."/>
            <person name="Bossard M.J."/>
            <person name="Tomaszek T.A."/>
            <person name="Levy M.A."/>
            <person name="Zhao B."/>
            <person name="Smith W.W."/>
            <person name="Abdel-Meguid S.S."/>
            <person name="Janson C.A."/>
            <person name="D'Alessio K.J."/>
            <person name="McQueney M.S."/>
            <person name="Amegadzie B.Y."/>
            <person name="Hanning C.R."/>
            <person name="Desjarlais R.L."/>
            <person name="Briand J."/>
            <person name="Sarkar S.K."/>
            <person name="Huddleston M.J."/>
            <person name="Ijames C.F."/>
            <person name="Carr S.A."/>
            <person name="Garnes K.T."/>
            <person name="Shu A."/>
            <person name="Heys J.R."/>
            <person name="Bradbeer J."/>
            <person name="Zembryki D."/>
            <person name="Veber D.F."/>
        </authorList>
    </citation>
    <scope>X-RAY CRYSTALLOGRAPHY (2.2 ANGSTROMS)</scope>
</reference>
<reference key="12">
    <citation type="journal article" date="1999" name="Biochemistry">
        <title>The crystal structure of human procathepsin K.</title>
        <authorList>
            <person name="LaLonde J.M."/>
            <person name="Zhao B."/>
            <person name="Janson C.A."/>
            <person name="D'Alessio K.J."/>
            <person name="McQueney M.S."/>
            <person name="Orsini M.J."/>
            <person name="Debouck C.M."/>
            <person name="Smith W.W."/>
        </authorList>
    </citation>
    <scope>X-RAY CRYSTALLOGRAPHY (2.8 ANGSTROMS) OF ZYMOGEN FORM</scope>
</reference>
<reference key="13">
    <citation type="journal article" date="1999" name="Protein Sci.">
        <title>Crystal structure of wild-type human procathepsin K.</title>
        <authorList>
            <person name="Sivaraman J."/>
            <person name="Lalumiere M."/>
            <person name="Menard R."/>
            <person name="Cygler M."/>
        </authorList>
    </citation>
    <scope>X-RAY CRYSTALLOGRAPHY (3.2 ANGSTROMS)</scope>
</reference>
<reference key="14">
    <citation type="journal article" date="1996" name="Science">
        <title>Pycnodysostosis, a lysosomal disease caused by cathepsin K deficiency.</title>
        <authorList>
            <person name="Gelb B.D."/>
            <person name="Shi G.-P."/>
            <person name="Chapman H.A."/>
            <person name="Desnick R.J."/>
        </authorList>
    </citation>
    <scope>VARIANT PKND ARG-146</scope>
</reference>
<reference key="15">
    <citation type="journal article" date="1998" name="Am. J. Hum. Genet.">
        <title>Paternal uniparental disomy for chromosome 1 revealed by molecular analysis of a patient with pycnodysostosis.</title>
        <authorList>
            <person name="Gelb B.D."/>
            <person name="Willner J.P."/>
            <person name="Dunn T.M."/>
            <person name="Kardon N.B."/>
            <person name="Verloes A."/>
            <person name="Poncin J."/>
            <person name="Desnick R.J."/>
        </authorList>
    </citation>
    <scope>VARIANT PKND VAL-277</scope>
</reference>
<reference key="16">
    <citation type="journal article" date="1999" name="J. Bone Miner. Res.">
        <title>Mutations of CTSK result in pycnodysostosis via a reduction in cathepsin K protein.</title>
        <authorList>
            <person name="Ho N."/>
            <person name="Punturieri A."/>
            <person name="Wilkin D."/>
            <person name="Szabo J."/>
            <person name="Johnson M."/>
            <person name="Whaley J."/>
            <person name="Davis J."/>
            <person name="Clark A."/>
            <person name="Weiss S."/>
            <person name="Francomano C."/>
        </authorList>
    </citation>
    <scope>VARIANT PKND GLU-79</scope>
</reference>
<reference key="17">
    <citation type="journal article" date="2000" name="Eur. J. Hum. Genet.">
        <title>Cathepsin K gene mutations and 1q21 haplotypes in at patients with pycnodysostosis in an outbred population.</title>
        <authorList>
            <person name="Haagerup A."/>
            <person name="Hertz J.M."/>
            <person name="Christensen M.F."/>
            <person name="Binderup H."/>
            <person name="Kruse T.A."/>
        </authorList>
    </citation>
    <scope>VARIANTS PKND GLU-79 AND PRO-309</scope>
</reference>
<reference key="18">
    <citation type="journal article" date="2012" name="Mol. Syndromol.">
        <title>Novel Compound Heterozygous Mutations in the Cathepsin K Gene in Japanese Female Siblings with Pyknodysostosis.</title>
        <authorList>
            <person name="Matsushita M."/>
            <person name="Kitoh H."/>
            <person name="Kaneko H."/>
            <person name="Mishima K."/>
            <person name="Itoh Y."/>
            <person name="Hattori T."/>
            <person name="Ishiguro N."/>
        </authorList>
    </citation>
    <scope>VARIANTS PKND PRO-122 AND VAL-277</scope>
</reference>
<reference key="19">
    <citation type="journal article" date="2015" name="J. Dent. Res.">
        <title>Dental Abnormalities Caused by Novel Compound Heterozygous CTSK Mutations.</title>
        <authorList>
            <person name="Xue Y."/>
            <person name="Wang L."/>
            <person name="Xia D."/>
            <person name="Li Q."/>
            <person name="Gao S."/>
            <person name="Dong M."/>
            <person name="Cai T."/>
            <person name="Shi S."/>
            <person name="He L."/>
            <person name="Hu K."/>
            <person name="Mao T."/>
            <person name="Duan X."/>
        </authorList>
    </citation>
    <scope>VARIANT PKND CYS-283</scope>
    <scope>CHARACTERIZATION OF VARIANT PKND CYS-283</scope>
</reference>
<dbReference type="EC" id="3.4.22.38"/>
<dbReference type="EMBL" id="U13665">
    <property type="protein sequence ID" value="AAA65233.1"/>
    <property type="molecule type" value="mRNA"/>
</dbReference>
<dbReference type="EMBL" id="X82153">
    <property type="protein sequence ID" value="CAA57649.1"/>
    <property type="molecule type" value="mRNA"/>
</dbReference>
<dbReference type="EMBL" id="U20280">
    <property type="protein sequence ID" value="AAA95998.1"/>
    <property type="molecule type" value="mRNA"/>
</dbReference>
<dbReference type="EMBL" id="S79895">
    <property type="protein sequence ID" value="AAB35521.1"/>
    <property type="molecule type" value="mRNA"/>
</dbReference>
<dbReference type="EMBL" id="CR541675">
    <property type="protein sequence ID" value="CAG46476.1"/>
    <property type="molecule type" value="mRNA"/>
</dbReference>
<dbReference type="EMBL" id="AL355860">
    <property type="status" value="NOT_ANNOTATED_CDS"/>
    <property type="molecule type" value="Genomic_DNA"/>
</dbReference>
<dbReference type="EMBL" id="AL356292">
    <property type="status" value="NOT_ANNOTATED_CDS"/>
    <property type="molecule type" value="Genomic_DNA"/>
</dbReference>
<dbReference type="EMBL" id="CH471121">
    <property type="protein sequence ID" value="EAW53516.1"/>
    <property type="molecule type" value="Genomic_DNA"/>
</dbReference>
<dbReference type="EMBL" id="BC016058">
    <property type="protein sequence ID" value="AAH16058.1"/>
    <property type="molecule type" value="mRNA"/>
</dbReference>
<dbReference type="CCDS" id="CCDS969.1"/>
<dbReference type="PIR" id="JC2476">
    <property type="entry name" value="JC2476"/>
</dbReference>
<dbReference type="RefSeq" id="NP_000387.1">
    <property type="nucleotide sequence ID" value="NM_000396.4"/>
</dbReference>
<dbReference type="PDB" id="1ATK">
    <property type="method" value="X-ray"/>
    <property type="resolution" value="2.20 A"/>
    <property type="chains" value="A=115-329"/>
</dbReference>
<dbReference type="PDB" id="1AU0">
    <property type="method" value="X-ray"/>
    <property type="resolution" value="2.60 A"/>
    <property type="chains" value="A=115-329"/>
</dbReference>
<dbReference type="PDB" id="1AU2">
    <property type="method" value="X-ray"/>
    <property type="resolution" value="2.60 A"/>
    <property type="chains" value="A=115-329"/>
</dbReference>
<dbReference type="PDB" id="1AU3">
    <property type="method" value="X-ray"/>
    <property type="resolution" value="2.50 A"/>
    <property type="chains" value="A=115-329"/>
</dbReference>
<dbReference type="PDB" id="1AU4">
    <property type="method" value="X-ray"/>
    <property type="resolution" value="2.30 A"/>
    <property type="chains" value="A=115-329"/>
</dbReference>
<dbReference type="PDB" id="1AYU">
    <property type="method" value="X-ray"/>
    <property type="resolution" value="2.20 A"/>
    <property type="chains" value="A=115-329"/>
</dbReference>
<dbReference type="PDB" id="1AYV">
    <property type="method" value="X-ray"/>
    <property type="resolution" value="2.30 A"/>
    <property type="chains" value="A=115-329"/>
</dbReference>
<dbReference type="PDB" id="1AYW">
    <property type="method" value="X-ray"/>
    <property type="resolution" value="2.40 A"/>
    <property type="chains" value="A=115-329"/>
</dbReference>
<dbReference type="PDB" id="1BGO">
    <property type="method" value="X-ray"/>
    <property type="resolution" value="2.30 A"/>
    <property type="chains" value="A=115-329"/>
</dbReference>
<dbReference type="PDB" id="1BY8">
    <property type="method" value="X-ray"/>
    <property type="resolution" value="2.60 A"/>
    <property type="chains" value="A=16-329"/>
</dbReference>
<dbReference type="PDB" id="1MEM">
    <property type="method" value="X-ray"/>
    <property type="resolution" value="1.80 A"/>
    <property type="chains" value="A=115-329"/>
</dbReference>
<dbReference type="PDB" id="1NL6">
    <property type="method" value="X-ray"/>
    <property type="resolution" value="2.80 A"/>
    <property type="chains" value="A/B=115-329"/>
</dbReference>
<dbReference type="PDB" id="1NLJ">
    <property type="method" value="X-ray"/>
    <property type="resolution" value="2.40 A"/>
    <property type="chains" value="A/B=115-329"/>
</dbReference>
<dbReference type="PDB" id="1Q6K">
    <property type="method" value="X-ray"/>
    <property type="resolution" value="2.10 A"/>
    <property type="chains" value="A=115-329"/>
</dbReference>
<dbReference type="PDB" id="1SNK">
    <property type="method" value="X-ray"/>
    <property type="resolution" value="2.40 A"/>
    <property type="chains" value="A=116-329"/>
</dbReference>
<dbReference type="PDB" id="1TU6">
    <property type="method" value="X-ray"/>
    <property type="resolution" value="1.75 A"/>
    <property type="chains" value="A/B=115-329"/>
</dbReference>
<dbReference type="PDB" id="1U9V">
    <property type="method" value="X-ray"/>
    <property type="resolution" value="2.20 A"/>
    <property type="chains" value="A=113-329"/>
</dbReference>
<dbReference type="PDB" id="1U9W">
    <property type="method" value="X-ray"/>
    <property type="resolution" value="2.30 A"/>
    <property type="chains" value="A=113-329"/>
</dbReference>
<dbReference type="PDB" id="1U9X">
    <property type="method" value="X-ray"/>
    <property type="resolution" value="2.10 A"/>
    <property type="chains" value="A=113-329"/>
</dbReference>
<dbReference type="PDB" id="1VSN">
    <property type="method" value="X-ray"/>
    <property type="resolution" value="2.00 A"/>
    <property type="chains" value="A=115-329"/>
</dbReference>
<dbReference type="PDB" id="1YK7">
    <property type="method" value="X-ray"/>
    <property type="resolution" value="2.50 A"/>
    <property type="chains" value="A=115-329"/>
</dbReference>
<dbReference type="PDB" id="1YK8">
    <property type="method" value="X-ray"/>
    <property type="resolution" value="2.60 A"/>
    <property type="chains" value="A=115-329"/>
</dbReference>
<dbReference type="PDB" id="1YT7">
    <property type="method" value="X-ray"/>
    <property type="resolution" value="2.30 A"/>
    <property type="chains" value="A=115-329"/>
</dbReference>
<dbReference type="PDB" id="2ATO">
    <property type="method" value="X-ray"/>
    <property type="resolution" value="2.00 A"/>
    <property type="chains" value="A=115-329"/>
</dbReference>
<dbReference type="PDB" id="2AUX">
    <property type="method" value="X-ray"/>
    <property type="resolution" value="2.40 A"/>
    <property type="chains" value="A=115-329"/>
</dbReference>
<dbReference type="PDB" id="2AUZ">
    <property type="method" value="X-ray"/>
    <property type="resolution" value="2.30 A"/>
    <property type="chains" value="A=115-329"/>
</dbReference>
<dbReference type="PDB" id="2BDL">
    <property type="method" value="X-ray"/>
    <property type="resolution" value="2.00 A"/>
    <property type="chains" value="A=115-329"/>
</dbReference>
<dbReference type="PDB" id="2R6N">
    <property type="method" value="X-ray"/>
    <property type="resolution" value="1.95 A"/>
    <property type="chains" value="A=113-329"/>
</dbReference>
<dbReference type="PDB" id="3C9E">
    <property type="method" value="X-ray"/>
    <property type="resolution" value="1.80 A"/>
    <property type="chains" value="A=115-329"/>
</dbReference>
<dbReference type="PDB" id="3H7D">
    <property type="method" value="X-ray"/>
    <property type="resolution" value="2.24 A"/>
    <property type="chains" value="A/E=115-329"/>
</dbReference>
<dbReference type="PDB" id="3KW9">
    <property type="method" value="X-ray"/>
    <property type="resolution" value="1.80 A"/>
    <property type="chains" value="A=115-329"/>
</dbReference>
<dbReference type="PDB" id="3KWB">
    <property type="method" value="X-ray"/>
    <property type="resolution" value="2.02 A"/>
    <property type="chains" value="X/Y=115-329"/>
</dbReference>
<dbReference type="PDB" id="3KWZ">
    <property type="method" value="X-ray"/>
    <property type="resolution" value="1.49 A"/>
    <property type="chains" value="A=115-329"/>
</dbReference>
<dbReference type="PDB" id="3KX1">
    <property type="method" value="X-ray"/>
    <property type="resolution" value="1.51 A"/>
    <property type="chains" value="A=115-329"/>
</dbReference>
<dbReference type="PDB" id="3O0U">
    <property type="method" value="X-ray"/>
    <property type="resolution" value="1.80 A"/>
    <property type="chains" value="A=115-329"/>
</dbReference>
<dbReference type="PDB" id="3O1G">
    <property type="method" value="X-ray"/>
    <property type="resolution" value="1.65 A"/>
    <property type="chains" value="A=115-329"/>
</dbReference>
<dbReference type="PDB" id="3OVZ">
    <property type="method" value="X-ray"/>
    <property type="resolution" value="2.02 A"/>
    <property type="chains" value="A=121-329"/>
</dbReference>
<dbReference type="PDB" id="4DMX">
    <property type="method" value="X-ray"/>
    <property type="resolution" value="1.70 A"/>
    <property type="chains" value="A=115-329"/>
</dbReference>
<dbReference type="PDB" id="4DMY">
    <property type="method" value="X-ray"/>
    <property type="resolution" value="1.63 A"/>
    <property type="chains" value="A/B=115-329"/>
</dbReference>
<dbReference type="PDB" id="4N79">
    <property type="method" value="X-ray"/>
    <property type="resolution" value="2.62 A"/>
    <property type="chains" value="A=115-329"/>
</dbReference>
<dbReference type="PDB" id="4N8W">
    <property type="method" value="X-ray"/>
    <property type="resolution" value="2.02 A"/>
    <property type="chains" value="A=115-329"/>
</dbReference>
<dbReference type="PDB" id="4X6H">
    <property type="method" value="X-ray"/>
    <property type="resolution" value="1.00 A"/>
    <property type="chains" value="A=115-329"/>
</dbReference>
<dbReference type="PDB" id="4X6I">
    <property type="method" value="X-ray"/>
    <property type="resolution" value="1.87 A"/>
    <property type="chains" value="A=115-329"/>
</dbReference>
<dbReference type="PDB" id="4X6J">
    <property type="method" value="X-ray"/>
    <property type="resolution" value="1.59 A"/>
    <property type="chains" value="A=115-329"/>
</dbReference>
<dbReference type="PDB" id="4YV8">
    <property type="method" value="X-ray"/>
    <property type="resolution" value="2.00 A"/>
    <property type="chains" value="A=115-329"/>
</dbReference>
<dbReference type="PDB" id="4YVA">
    <property type="method" value="X-ray"/>
    <property type="resolution" value="1.80 A"/>
    <property type="chains" value="A=115-329"/>
</dbReference>
<dbReference type="PDB" id="5J94">
    <property type="method" value="X-ray"/>
    <property type="resolution" value="2.60 A"/>
    <property type="chains" value="A=107-329"/>
</dbReference>
<dbReference type="PDB" id="5JA7">
    <property type="method" value="X-ray"/>
    <property type="resolution" value="1.61 A"/>
    <property type="chains" value="A/B=107-329"/>
</dbReference>
<dbReference type="PDB" id="5JH3">
    <property type="method" value="X-ray"/>
    <property type="resolution" value="1.75 A"/>
    <property type="chains" value="A=107-329"/>
</dbReference>
<dbReference type="PDB" id="5TDI">
    <property type="method" value="X-ray"/>
    <property type="resolution" value="1.40 A"/>
    <property type="chains" value="A=115-329"/>
</dbReference>
<dbReference type="PDB" id="5TUN">
    <property type="method" value="X-ray"/>
    <property type="resolution" value="1.62 A"/>
    <property type="chains" value="A=115-329"/>
</dbReference>
<dbReference type="PDB" id="5Z5O">
    <property type="method" value="X-ray"/>
    <property type="resolution" value="1.92 A"/>
    <property type="chains" value="A=16-329, B=16-88"/>
</dbReference>
<dbReference type="PDB" id="6ASH">
    <property type="method" value="X-ray"/>
    <property type="resolution" value="1.42 A"/>
    <property type="chains" value="A=115-329"/>
</dbReference>
<dbReference type="PDB" id="6HGY">
    <property type="method" value="X-ray"/>
    <property type="resolution" value="2.20 A"/>
    <property type="chains" value="A=115-329"/>
</dbReference>
<dbReference type="PDB" id="6PXF">
    <property type="method" value="X-ray"/>
    <property type="resolution" value="1.85 A"/>
    <property type="chains" value="A=115-329"/>
</dbReference>
<dbReference type="PDB" id="6QBS">
    <property type="method" value="X-ray"/>
    <property type="resolution" value="1.70 A"/>
    <property type="chains" value="A/B=115-329"/>
</dbReference>
<dbReference type="PDB" id="6QL8">
    <property type="method" value="X-ray"/>
    <property type="resolution" value="1.80 A"/>
    <property type="chains" value="A=113-329"/>
</dbReference>
<dbReference type="PDB" id="6QLM">
    <property type="method" value="X-ray"/>
    <property type="resolution" value="1.50 A"/>
    <property type="chains" value="A/B=114-329"/>
</dbReference>
<dbReference type="PDB" id="6QLW">
    <property type="method" value="X-ray"/>
    <property type="resolution" value="2.00 A"/>
    <property type="chains" value="A/B/C/D=114-329"/>
</dbReference>
<dbReference type="PDB" id="6QLX">
    <property type="method" value="X-ray"/>
    <property type="resolution" value="2.10 A"/>
    <property type="chains" value="A=114-329"/>
</dbReference>
<dbReference type="PDB" id="6QM0">
    <property type="method" value="X-ray"/>
    <property type="resolution" value="1.90 A"/>
    <property type="chains" value="A/B=114-329"/>
</dbReference>
<dbReference type="PDB" id="7NXL">
    <property type="method" value="X-ray"/>
    <property type="resolution" value="1.80 A"/>
    <property type="chains" value="AAA=114-329"/>
</dbReference>
<dbReference type="PDB" id="7NXM">
    <property type="method" value="X-ray"/>
    <property type="resolution" value="1.72 A"/>
    <property type="chains" value="A=114-329"/>
</dbReference>
<dbReference type="PDB" id="7PCK">
    <property type="method" value="X-ray"/>
    <property type="resolution" value="3.20 A"/>
    <property type="chains" value="A/B/C/D=16-329"/>
</dbReference>
<dbReference type="PDB" id="7QBL">
    <property type="method" value="X-ray"/>
    <property type="resolution" value="2.00 A"/>
    <property type="chains" value="A=115-329"/>
</dbReference>
<dbReference type="PDB" id="7QBM">
    <property type="method" value="X-ray"/>
    <property type="resolution" value="1.88 A"/>
    <property type="chains" value="A/P=16-329"/>
</dbReference>
<dbReference type="PDB" id="7QBN">
    <property type="method" value="X-ray"/>
    <property type="resolution" value="1.55 A"/>
    <property type="chains" value="A=113-329"/>
</dbReference>
<dbReference type="PDB" id="7QBO">
    <property type="method" value="X-ray"/>
    <property type="resolution" value="1.90 A"/>
    <property type="chains" value="A/P=16-329"/>
</dbReference>
<dbReference type="PDB" id="8C3D">
    <property type="method" value="X-ray"/>
    <property type="resolution" value="2.00 A"/>
    <property type="chains" value="A=115-329"/>
</dbReference>
<dbReference type="PDBsum" id="1ATK"/>
<dbReference type="PDBsum" id="1AU0"/>
<dbReference type="PDBsum" id="1AU2"/>
<dbReference type="PDBsum" id="1AU3"/>
<dbReference type="PDBsum" id="1AU4"/>
<dbReference type="PDBsum" id="1AYU"/>
<dbReference type="PDBsum" id="1AYV"/>
<dbReference type="PDBsum" id="1AYW"/>
<dbReference type="PDBsum" id="1BGO"/>
<dbReference type="PDBsum" id="1BY8"/>
<dbReference type="PDBsum" id="1MEM"/>
<dbReference type="PDBsum" id="1NL6"/>
<dbReference type="PDBsum" id="1NLJ"/>
<dbReference type="PDBsum" id="1Q6K"/>
<dbReference type="PDBsum" id="1SNK"/>
<dbReference type="PDBsum" id="1TU6"/>
<dbReference type="PDBsum" id="1U9V"/>
<dbReference type="PDBsum" id="1U9W"/>
<dbReference type="PDBsum" id="1U9X"/>
<dbReference type="PDBsum" id="1VSN"/>
<dbReference type="PDBsum" id="1YK7"/>
<dbReference type="PDBsum" id="1YK8"/>
<dbReference type="PDBsum" id="1YT7"/>
<dbReference type="PDBsum" id="2ATO"/>
<dbReference type="PDBsum" id="2AUX"/>
<dbReference type="PDBsum" id="2AUZ"/>
<dbReference type="PDBsum" id="2BDL"/>
<dbReference type="PDBsum" id="2R6N"/>
<dbReference type="PDBsum" id="3C9E"/>
<dbReference type="PDBsum" id="3H7D"/>
<dbReference type="PDBsum" id="3KW9"/>
<dbReference type="PDBsum" id="3KWB"/>
<dbReference type="PDBsum" id="3KWZ"/>
<dbReference type="PDBsum" id="3KX1"/>
<dbReference type="PDBsum" id="3O0U"/>
<dbReference type="PDBsum" id="3O1G"/>
<dbReference type="PDBsum" id="3OVZ"/>
<dbReference type="PDBsum" id="4DMX"/>
<dbReference type="PDBsum" id="4DMY"/>
<dbReference type="PDBsum" id="4N79"/>
<dbReference type="PDBsum" id="4N8W"/>
<dbReference type="PDBsum" id="4X6H"/>
<dbReference type="PDBsum" id="4X6I"/>
<dbReference type="PDBsum" id="4X6J"/>
<dbReference type="PDBsum" id="4YV8"/>
<dbReference type="PDBsum" id="4YVA"/>
<dbReference type="PDBsum" id="5J94"/>
<dbReference type="PDBsum" id="5JA7"/>
<dbReference type="PDBsum" id="5JH3"/>
<dbReference type="PDBsum" id="5TDI"/>
<dbReference type="PDBsum" id="5TUN"/>
<dbReference type="PDBsum" id="5Z5O"/>
<dbReference type="PDBsum" id="6ASH"/>
<dbReference type="PDBsum" id="6HGY"/>
<dbReference type="PDBsum" id="6PXF"/>
<dbReference type="PDBsum" id="6QBS"/>
<dbReference type="PDBsum" id="6QL8"/>
<dbReference type="PDBsum" id="6QLM"/>
<dbReference type="PDBsum" id="6QLW"/>
<dbReference type="PDBsum" id="6QLX"/>
<dbReference type="PDBsum" id="6QM0"/>
<dbReference type="PDBsum" id="7NXL"/>
<dbReference type="PDBsum" id="7NXM"/>
<dbReference type="PDBsum" id="7PCK"/>
<dbReference type="PDBsum" id="7QBL"/>
<dbReference type="PDBsum" id="7QBM"/>
<dbReference type="PDBsum" id="7QBN"/>
<dbReference type="PDBsum" id="7QBO"/>
<dbReference type="PDBsum" id="8C3D"/>
<dbReference type="SMR" id="P43235"/>
<dbReference type="BioGRID" id="107893">
    <property type="interactions" value="17"/>
</dbReference>
<dbReference type="DIP" id="DIP-39993N"/>
<dbReference type="FunCoup" id="P43235">
    <property type="interactions" value="358"/>
</dbReference>
<dbReference type="IntAct" id="P43235">
    <property type="interactions" value="11"/>
</dbReference>
<dbReference type="STRING" id="9606.ENSP00000271651"/>
<dbReference type="BindingDB" id="P43235"/>
<dbReference type="ChEMBL" id="CHEMBL268"/>
<dbReference type="DrugBank" id="DB08287">
    <property type="generic name" value="(1R,2R)-N-(2-Aminoethyl)-2-{[(4-methoxyphenyl)sulfonyl]methyl}cyclohexanecarboxamide"/>
</dbReference>
<dbReference type="DrugBank" id="DB04244">
    <property type="generic name" value="(2R)-2-(3-Biphenylyl)-N-{(2R)-2-hydroxy-3-[(2-pyridinylsulfonyl)amino]propyl}-4-methylpentanamide"/>
</dbReference>
<dbReference type="DrugBank" id="DB07592">
    <property type="generic name" value="(2R)-3-Methyl-1-phenyl-2-butanyl [(2S)-1-oxo-2-hexanyl]carbamate"/>
</dbReference>
<dbReference type="DrugBank" id="DB07593">
    <property type="generic name" value="1-(PHENYLMETHYL)CYCLOPENTYL[(1S)-1-FORMYLPENTYL]CARBAMATE"/>
</dbReference>
<dbReference type="DrugBank" id="DB07563">
    <property type="generic name" value="1-{7-cyclohexyl-6-[4-(4-methylpiperazin-1-yl)benzyl]-7H-pyrrolo[2,3-d]pyrimidin-2-yl}methanamine"/>
</dbReference>
<dbReference type="DrugBank" id="DB02869">
    <property type="generic name" value="3-amino-5-phenylpentane"/>
</dbReference>
<dbReference type="DrugBank" id="DB07965">
    <property type="generic name" value="6-(cyclohexylamino)-9-[2-(4-methylpiperazin-1-yl)-ethyl]-9H-purine-2-carbonitrile"/>
</dbReference>
<dbReference type="DrugBank" id="DB07967">
    <property type="generic name" value="9-CYCLOPENTYL-6-[2-(3-IMIDAZOL-1-YL-PROPOXY)-PHENYLAMINO]-9H-PURINE-2-CARBONITRILE"/>
</dbReference>
<dbReference type="DrugBank" id="DB01858">
    <property type="generic name" value="[1-(4-Fluorobenzyl)Cyclobutyl]Methyl (1s)-1-[Oxo(1h-Pyrazol-5-Ylamino)Acetyl]Pentylcarbamate"/>
</dbReference>
<dbReference type="DrugBank" id="DB12239">
    <property type="generic name" value="Balicatib"/>
</dbReference>
<dbReference type="DrugBank" id="DB02679">
    <property type="generic name" value="Cyanamide"/>
</dbReference>
<dbReference type="DrugBank" id="DB03891">
    <property type="generic name" value="Dibenzyl (carbonylbis{2,1-hydrazinediyl[(2S)-4-methyl-1-oxo-1,2-pentanediyl]})biscarbamate"/>
</dbReference>
<dbReference type="DrugBank" id="DB05736">
    <property type="generic name" value="MIV-701"/>
</dbReference>
<dbReference type="DrugBank" id="DB15599">
    <property type="generic name" value="MIV-711"/>
</dbReference>
<dbReference type="DrugBank" id="DB08270">
    <property type="generic name" value="N-(2-AMINOETHYL)-N~2~-{(1S)-1-[4'-(AMINOSULFONYL)BIPHENYL-4-YL]-2,2,2-TRIFLUOROETHYL}-L-LEUCINAMIDE"/>
</dbReference>
<dbReference type="DrugBank" id="DB03642">
    <property type="generic name" value="N-[(2S)-4-Methyl-1-oxo-1-{[(4S)-3-oxo-1-(2-pyridinylsulfonyl)-4-azepanyl]amino}-2-pentanyl]-1-benzofuran-2-carboxamide"/>
</dbReference>
<dbReference type="DrugBank" id="DB04234">
    <property type="generic name" value="N2-({[(4-Bromophenyl)Methyl]Oxy}Carbonyl)-N1-[(1s)-1-Formylpentyl]-L-Leucinamide"/>
</dbReference>
<dbReference type="DrugBank" id="DB03405">
    <property type="generic name" value="N2-[(Benzyloxy)carbonyl]-N-[(3R)-1-{N-[(benzyloxy)carbonyl]-L-leucyl}-4-oxo-3-pyrrolidinyl]-L-leucinamide"/>
</dbReference>
<dbReference type="DrugBank" id="DB03456">
    <property type="generic name" value="N2-[(benzyloxy)carbonyl]-n1-[(3S)-1-cyanopyrrolidin-3-yl]-l-leucinamide"/>
</dbReference>
<dbReference type="DrugBank" id="DB06670">
    <property type="generic name" value="Odanacatib"/>
</dbReference>
<dbReference type="DrugBank" id="DB19206">
    <property type="generic name" value="ONO-5334"/>
</dbReference>
<dbReference type="DrugBank" id="DB06367">
    <property type="generic name" value="Relacatib"/>
</dbReference>
<dbReference type="DrugBank" id="DB08594">
    <property type="generic name" value="TERT-BUTYL 2-CYANO-2-METHYLHYDRAZINECARBOXYLATE"/>
</dbReference>
<dbReference type="DrugBank" id="DB04523">
    <property type="generic name" value="Tert-Butyl(1s)-1-Cyclohexyl-2-Oxoethylcarbamate"/>
</dbReference>
<dbReference type="DrugCentral" id="P43235"/>
<dbReference type="GuidetoPHARMACOLOGY" id="2350"/>
<dbReference type="MEROPS" id="C01.036"/>
<dbReference type="MEROPS" id="I29.007"/>
<dbReference type="GlyCosmos" id="P43235">
    <property type="glycosylation" value="1 site, No reported glycans"/>
</dbReference>
<dbReference type="GlyGen" id="P43235">
    <property type="glycosylation" value="3 sites"/>
</dbReference>
<dbReference type="iPTMnet" id="P43235"/>
<dbReference type="PhosphoSitePlus" id="P43235"/>
<dbReference type="BioMuta" id="CTSK"/>
<dbReference type="DMDM" id="1168793"/>
<dbReference type="jPOST" id="P43235"/>
<dbReference type="MassIVE" id="P43235"/>
<dbReference type="PaxDb" id="9606-ENSP00000271651"/>
<dbReference type="PeptideAtlas" id="P43235"/>
<dbReference type="ProteomicsDB" id="55598"/>
<dbReference type="Antibodypedia" id="34039">
    <property type="antibodies" value="597 antibodies from 36 providers"/>
</dbReference>
<dbReference type="DNASU" id="1513"/>
<dbReference type="Ensembl" id="ENST00000271651.8">
    <property type="protein sequence ID" value="ENSP00000271651.3"/>
    <property type="gene ID" value="ENSG00000143387.14"/>
</dbReference>
<dbReference type="Ensembl" id="ENST00000676824.1">
    <property type="protein sequence ID" value="ENSP00000504176.1"/>
    <property type="gene ID" value="ENSG00000143387.14"/>
</dbReference>
<dbReference type="Ensembl" id="ENST00000676966.1">
    <property type="protein sequence ID" value="ENSP00000503723.1"/>
    <property type="gene ID" value="ENSG00000143387.14"/>
</dbReference>
<dbReference type="GeneID" id="1513"/>
<dbReference type="KEGG" id="hsa:1513"/>
<dbReference type="MANE-Select" id="ENST00000271651.8">
    <property type="protein sequence ID" value="ENSP00000271651.3"/>
    <property type="RefSeq nucleotide sequence ID" value="NM_000396.4"/>
    <property type="RefSeq protein sequence ID" value="NP_000387.1"/>
</dbReference>
<dbReference type="UCSC" id="uc001evp.3">
    <property type="organism name" value="human"/>
</dbReference>
<dbReference type="AGR" id="HGNC:2536"/>
<dbReference type="CTD" id="1513"/>
<dbReference type="DisGeNET" id="1513"/>
<dbReference type="GeneCards" id="CTSK"/>
<dbReference type="GeneReviews" id="CTSK"/>
<dbReference type="HGNC" id="HGNC:2536">
    <property type="gene designation" value="CTSK"/>
</dbReference>
<dbReference type="HPA" id="ENSG00000143387">
    <property type="expression patterns" value="Tissue enhanced (cervix)"/>
</dbReference>
<dbReference type="MalaCards" id="CTSK"/>
<dbReference type="MIM" id="265800">
    <property type="type" value="phenotype"/>
</dbReference>
<dbReference type="MIM" id="601105">
    <property type="type" value="gene"/>
</dbReference>
<dbReference type="neXtProt" id="NX_P43235"/>
<dbReference type="OpenTargets" id="ENSG00000143387"/>
<dbReference type="Orphanet" id="763">
    <property type="disease" value="Pycnodysostosis"/>
</dbReference>
<dbReference type="PharmGKB" id="PA27034"/>
<dbReference type="VEuPathDB" id="HostDB:ENSG00000143387"/>
<dbReference type="eggNOG" id="KOG1543">
    <property type="taxonomic scope" value="Eukaryota"/>
</dbReference>
<dbReference type="GeneTree" id="ENSGT00940000157759"/>
<dbReference type="HOGENOM" id="CLU_012184_1_2_1"/>
<dbReference type="InParanoid" id="P43235"/>
<dbReference type="OMA" id="EGETCCC"/>
<dbReference type="OrthoDB" id="65740at2759"/>
<dbReference type="PAN-GO" id="P43235">
    <property type="GO annotations" value="5 GO annotations based on evolutionary models"/>
</dbReference>
<dbReference type="PhylomeDB" id="P43235"/>
<dbReference type="TreeFam" id="TF313739"/>
<dbReference type="BRENDA" id="3.4.22.38">
    <property type="organism ID" value="2681"/>
</dbReference>
<dbReference type="PathwayCommons" id="P43235"/>
<dbReference type="Reactome" id="R-HSA-1442490">
    <property type="pathway name" value="Collagen degradation"/>
</dbReference>
<dbReference type="Reactome" id="R-HSA-1474228">
    <property type="pathway name" value="Degradation of the extracellular matrix"/>
</dbReference>
<dbReference type="Reactome" id="R-HSA-1592389">
    <property type="pathway name" value="Activation of Matrix Metalloproteinases"/>
</dbReference>
<dbReference type="Reactome" id="R-HSA-1679131">
    <property type="pathway name" value="Trafficking and processing of endosomal TLR"/>
</dbReference>
<dbReference type="Reactome" id="R-HSA-2132295">
    <property type="pathway name" value="MHC class II antigen presentation"/>
</dbReference>
<dbReference type="Reactome" id="R-HSA-8939242">
    <property type="pathway name" value="RUNX1 regulates transcription of genes involved in differentiation of keratinocytes"/>
</dbReference>
<dbReference type="SignaLink" id="P43235"/>
<dbReference type="SIGNOR" id="P43235"/>
<dbReference type="BioGRID-ORCS" id="1513">
    <property type="hits" value="17 hits in 1165 CRISPR screens"/>
</dbReference>
<dbReference type="ChiTaRS" id="CTSK">
    <property type="organism name" value="human"/>
</dbReference>
<dbReference type="EvolutionaryTrace" id="P43235"/>
<dbReference type="GeneWiki" id="Cathepsin_K"/>
<dbReference type="GenomeRNAi" id="1513"/>
<dbReference type="Pharos" id="P43235">
    <property type="development level" value="Tchem"/>
</dbReference>
<dbReference type="PRO" id="PR:P43235"/>
<dbReference type="Proteomes" id="UP000005640">
    <property type="component" value="Chromosome 1"/>
</dbReference>
<dbReference type="RNAct" id="P43235">
    <property type="molecule type" value="protein"/>
</dbReference>
<dbReference type="Bgee" id="ENSG00000143387">
    <property type="expression patterns" value="Expressed in periodontal ligament and 168 other cell types or tissues"/>
</dbReference>
<dbReference type="ExpressionAtlas" id="P43235">
    <property type="expression patterns" value="baseline and differential"/>
</dbReference>
<dbReference type="GO" id="GO:0016324">
    <property type="term" value="C:apical plasma membrane"/>
    <property type="evidence" value="ECO:0007669"/>
    <property type="project" value="UniProtKB-SubCell"/>
</dbReference>
<dbReference type="GO" id="GO:0036021">
    <property type="term" value="C:endolysosome lumen"/>
    <property type="evidence" value="ECO:0000304"/>
    <property type="project" value="Reactome"/>
</dbReference>
<dbReference type="GO" id="GO:0009897">
    <property type="term" value="C:external side of plasma membrane"/>
    <property type="evidence" value="ECO:0007669"/>
    <property type="project" value="Ensembl"/>
</dbReference>
<dbReference type="GO" id="GO:0005576">
    <property type="term" value="C:extracellular region"/>
    <property type="evidence" value="ECO:0000304"/>
    <property type="project" value="Reactome"/>
</dbReference>
<dbReference type="GO" id="GO:0005615">
    <property type="term" value="C:extracellular space"/>
    <property type="evidence" value="ECO:0000314"/>
    <property type="project" value="UniProtKB"/>
</dbReference>
<dbReference type="GO" id="GO:0043231">
    <property type="term" value="C:intracellular membrane-bounded organelle"/>
    <property type="evidence" value="ECO:0000314"/>
    <property type="project" value="HPA"/>
</dbReference>
<dbReference type="GO" id="GO:0043202">
    <property type="term" value="C:lysosomal lumen"/>
    <property type="evidence" value="ECO:0000304"/>
    <property type="project" value="Reactome"/>
</dbReference>
<dbReference type="GO" id="GO:0005764">
    <property type="term" value="C:lysosome"/>
    <property type="evidence" value="ECO:0000314"/>
    <property type="project" value="UniProtKB"/>
</dbReference>
<dbReference type="GO" id="GO:0005654">
    <property type="term" value="C:nucleoplasm"/>
    <property type="evidence" value="ECO:0000314"/>
    <property type="project" value="HPA"/>
</dbReference>
<dbReference type="GO" id="GO:0005518">
    <property type="term" value="F:collagen binding"/>
    <property type="evidence" value="ECO:0000314"/>
    <property type="project" value="BHF-UCL"/>
</dbReference>
<dbReference type="GO" id="GO:0004197">
    <property type="term" value="F:cysteine-type endopeptidase activity"/>
    <property type="evidence" value="ECO:0000314"/>
    <property type="project" value="BHF-UCL"/>
</dbReference>
<dbReference type="GO" id="GO:0008234">
    <property type="term" value="F:cysteine-type peptidase activity"/>
    <property type="evidence" value="ECO:0000314"/>
    <property type="project" value="ARUK-UCL"/>
</dbReference>
<dbReference type="GO" id="GO:0001968">
    <property type="term" value="F:fibronectin binding"/>
    <property type="evidence" value="ECO:0000353"/>
    <property type="project" value="BHF-UCL"/>
</dbReference>
<dbReference type="GO" id="GO:0043394">
    <property type="term" value="F:proteoglycan binding"/>
    <property type="evidence" value="ECO:0000353"/>
    <property type="project" value="BHF-UCL"/>
</dbReference>
<dbReference type="GO" id="GO:0004252">
    <property type="term" value="F:serine-type endopeptidase activity"/>
    <property type="evidence" value="ECO:0000304"/>
    <property type="project" value="Reactome"/>
</dbReference>
<dbReference type="GO" id="GO:0045453">
    <property type="term" value="P:bone resorption"/>
    <property type="evidence" value="ECO:0007669"/>
    <property type="project" value="Ensembl"/>
</dbReference>
<dbReference type="GO" id="GO:0030574">
    <property type="term" value="P:collagen catabolic process"/>
    <property type="evidence" value="ECO:0000314"/>
    <property type="project" value="MGI"/>
</dbReference>
<dbReference type="GO" id="GO:0022617">
    <property type="term" value="P:extracellular matrix disassembly"/>
    <property type="evidence" value="ECO:0000304"/>
    <property type="project" value="Reactome"/>
</dbReference>
<dbReference type="GO" id="GO:0000423">
    <property type="term" value="P:mitophagy"/>
    <property type="evidence" value="ECO:0007001"/>
    <property type="project" value="ParkinsonsUK-UCL"/>
</dbReference>
<dbReference type="GO" id="GO:0061037">
    <property type="term" value="P:negative regulation of cartilage development"/>
    <property type="evidence" value="ECO:0007669"/>
    <property type="project" value="Ensembl"/>
</dbReference>
<dbReference type="GO" id="GO:0006508">
    <property type="term" value="P:proteolysis"/>
    <property type="evidence" value="ECO:0000304"/>
    <property type="project" value="ProtInc"/>
</dbReference>
<dbReference type="GO" id="GO:0051603">
    <property type="term" value="P:proteolysis involved in protein catabolic process"/>
    <property type="evidence" value="ECO:0000314"/>
    <property type="project" value="UniProtKB"/>
</dbReference>
<dbReference type="GO" id="GO:0006590">
    <property type="term" value="P:thyroid hormone generation"/>
    <property type="evidence" value="ECO:0000314"/>
    <property type="project" value="UniProtKB"/>
</dbReference>
<dbReference type="CDD" id="cd02248">
    <property type="entry name" value="Peptidase_C1A"/>
    <property type="match status" value="1"/>
</dbReference>
<dbReference type="FunFam" id="1.10.287.2250:FF:000003">
    <property type="entry name" value="Cathepsin L"/>
    <property type="match status" value="1"/>
</dbReference>
<dbReference type="FunFam" id="3.90.70.10:FF:000006">
    <property type="entry name" value="Cathepsin S"/>
    <property type="match status" value="1"/>
</dbReference>
<dbReference type="Gene3D" id="3.90.70.10">
    <property type="entry name" value="Cysteine proteinases"/>
    <property type="match status" value="1"/>
</dbReference>
<dbReference type="InterPro" id="IPR038765">
    <property type="entry name" value="Papain-like_cys_pep_sf"/>
</dbReference>
<dbReference type="InterPro" id="IPR025661">
    <property type="entry name" value="Pept_asp_AS"/>
</dbReference>
<dbReference type="InterPro" id="IPR000169">
    <property type="entry name" value="Pept_cys_AS"/>
</dbReference>
<dbReference type="InterPro" id="IPR025660">
    <property type="entry name" value="Pept_his_AS"/>
</dbReference>
<dbReference type="InterPro" id="IPR013128">
    <property type="entry name" value="Peptidase_C1A"/>
</dbReference>
<dbReference type="InterPro" id="IPR000668">
    <property type="entry name" value="Peptidase_C1A_C"/>
</dbReference>
<dbReference type="InterPro" id="IPR039417">
    <property type="entry name" value="Peptidase_C1A_papain-like"/>
</dbReference>
<dbReference type="InterPro" id="IPR013201">
    <property type="entry name" value="Prot_inhib_I29"/>
</dbReference>
<dbReference type="PANTHER" id="PTHR12411">
    <property type="entry name" value="CYSTEINE PROTEASE FAMILY C1-RELATED"/>
    <property type="match status" value="1"/>
</dbReference>
<dbReference type="Pfam" id="PF08246">
    <property type="entry name" value="Inhibitor_I29"/>
    <property type="match status" value="1"/>
</dbReference>
<dbReference type="Pfam" id="PF00112">
    <property type="entry name" value="Peptidase_C1"/>
    <property type="match status" value="1"/>
</dbReference>
<dbReference type="PRINTS" id="PR00705">
    <property type="entry name" value="PAPAIN"/>
</dbReference>
<dbReference type="SMART" id="SM00848">
    <property type="entry name" value="Inhibitor_I29"/>
    <property type="match status" value="1"/>
</dbReference>
<dbReference type="SMART" id="SM00645">
    <property type="entry name" value="Pept_C1"/>
    <property type="match status" value="1"/>
</dbReference>
<dbReference type="SUPFAM" id="SSF54001">
    <property type="entry name" value="Cysteine proteinases"/>
    <property type="match status" value="1"/>
</dbReference>
<dbReference type="PROSITE" id="PS00640">
    <property type="entry name" value="THIOL_PROTEASE_ASN"/>
    <property type="match status" value="1"/>
</dbReference>
<dbReference type="PROSITE" id="PS00139">
    <property type="entry name" value="THIOL_PROTEASE_CYS"/>
    <property type="match status" value="1"/>
</dbReference>
<dbReference type="PROSITE" id="PS00639">
    <property type="entry name" value="THIOL_PROTEASE_HIS"/>
    <property type="match status" value="1"/>
</dbReference>
<organism>
    <name type="scientific">Homo sapiens</name>
    <name type="common">Human</name>
    <dbReference type="NCBI Taxonomy" id="9606"/>
    <lineage>
        <taxon>Eukaryota</taxon>
        <taxon>Metazoa</taxon>
        <taxon>Chordata</taxon>
        <taxon>Craniata</taxon>
        <taxon>Vertebrata</taxon>
        <taxon>Euteleostomi</taxon>
        <taxon>Mammalia</taxon>
        <taxon>Eutheria</taxon>
        <taxon>Euarchontoglires</taxon>
        <taxon>Primates</taxon>
        <taxon>Haplorrhini</taxon>
        <taxon>Catarrhini</taxon>
        <taxon>Hominidae</taxon>
        <taxon>Homo</taxon>
    </lineage>
</organism>
<comment type="function">
    <text evidence="8">Thiol protease involved in osteoclastic bone resorption and may participate partially in the disorder of bone remodeling. Displays potent endoprotease activity against fibrinogen at acid pH. May play an important role in extracellular matrix degradation. Involved in the release of thyroid hormone thyroxine (T4) by limited proteolysis of TG/thyroglobulin in the thyroid follicle lumen (PubMed:11082042).</text>
</comment>
<comment type="catalytic activity">
    <reaction>
        <text>Broad proteolytic activity. With small-molecule substrates and inhibitors, the major determinant of specificity is P2, which is preferably Leu, Met &gt; Phe, and not Arg.</text>
        <dbReference type="EC" id="3.4.22.38"/>
    </reaction>
</comment>
<comment type="subcellular location">
    <subcellularLocation>
        <location evidence="8">Lysosome</location>
    </subcellularLocation>
    <subcellularLocation>
        <location evidence="8">Secreted</location>
    </subcellularLocation>
    <subcellularLocation>
        <location evidence="8">Apical cell membrane</location>
        <topology evidence="8">Peripheral membrane protein</topology>
        <orientation evidence="8">Extracellular side</orientation>
    </subcellularLocation>
    <text evidence="8">Localizes to the lumen of thyroid follicles and to the apical membrane of thyroid epithelial cells.</text>
</comment>
<comment type="tissue specificity">
    <text evidence="8 11">Predominantly expressed in osteoclasts (bones) (PubMed:7805878). Expressed in thyroid epithelial cells (PubMed:11082042).</text>
</comment>
<comment type="disease" evidence="6 7 9 10 12 13">
    <disease id="DI-00964">
        <name>Pycnodysostosis</name>
        <acronym>PKND</acronym>
        <description>A rare autosomal recessive bone disorder characterized by deformity of the skull, maxilla and phalanges, osteosclerosis, and fragility of bone.</description>
        <dbReference type="MIM" id="265800"/>
    </disease>
    <text>The disease is caused by variants affecting the gene represented in this entry.</text>
</comment>
<comment type="similarity">
    <text evidence="3 4 5">Belongs to the peptidase C1 family.</text>
</comment>